<name>UBIG_PARXL</name>
<proteinExistence type="inferred from homology"/>
<keyword id="KW-0489">Methyltransferase</keyword>
<keyword id="KW-1185">Reference proteome</keyword>
<keyword id="KW-0949">S-adenosyl-L-methionine</keyword>
<keyword id="KW-0808">Transferase</keyword>
<keyword id="KW-0831">Ubiquinone biosynthesis</keyword>
<sequence length="232" mass="25451">MTNADPHELQKFSDLAHRWWDPNAEFKPLHELNPIRLSWIDAHAHLTGKTVLDIGCGGGILSESMASLGAHVKGIDLSTQALGVADLHSLESGVTVDYEEIAAEALAAREPGTYDVVTCMEMLEHVPQPAAIVEACRTLVKPGGWVFFSTLNRNVKSYLFAVIGAEYIAQMLPKGTHDYARFIRPSELASFARATNLRTADIKGIVYNPLSKHFTLSADTSVNYMLACRRDA</sequence>
<dbReference type="EC" id="2.1.1.222" evidence="1"/>
<dbReference type="EC" id="2.1.1.64" evidence="1"/>
<dbReference type="EMBL" id="CP000270">
    <property type="protein sequence ID" value="ABE31975.1"/>
    <property type="molecule type" value="Genomic_DNA"/>
</dbReference>
<dbReference type="RefSeq" id="WP_011489489.1">
    <property type="nucleotide sequence ID" value="NC_007951.1"/>
</dbReference>
<dbReference type="SMR" id="Q13VB4"/>
<dbReference type="STRING" id="266265.Bxe_A0972"/>
<dbReference type="KEGG" id="bxb:DR64_3133"/>
<dbReference type="KEGG" id="bxe:Bxe_A0972"/>
<dbReference type="PATRIC" id="fig|266265.5.peg.3610"/>
<dbReference type="eggNOG" id="COG2227">
    <property type="taxonomic scope" value="Bacteria"/>
</dbReference>
<dbReference type="OrthoDB" id="9801538at2"/>
<dbReference type="UniPathway" id="UPA00232"/>
<dbReference type="Proteomes" id="UP000001817">
    <property type="component" value="Chromosome 1"/>
</dbReference>
<dbReference type="GO" id="GO:0102208">
    <property type="term" value="F:2-polyprenyl-6-hydroxyphenol methylase activity"/>
    <property type="evidence" value="ECO:0007669"/>
    <property type="project" value="UniProtKB-EC"/>
</dbReference>
<dbReference type="GO" id="GO:0061542">
    <property type="term" value="F:3-demethylubiquinol 3-O-methyltransferase activity"/>
    <property type="evidence" value="ECO:0007669"/>
    <property type="project" value="UniProtKB-UniRule"/>
</dbReference>
<dbReference type="GO" id="GO:0010420">
    <property type="term" value="F:polyprenyldihydroxybenzoate methyltransferase activity"/>
    <property type="evidence" value="ECO:0007669"/>
    <property type="project" value="InterPro"/>
</dbReference>
<dbReference type="GO" id="GO:0032259">
    <property type="term" value="P:methylation"/>
    <property type="evidence" value="ECO:0007669"/>
    <property type="project" value="UniProtKB-KW"/>
</dbReference>
<dbReference type="CDD" id="cd02440">
    <property type="entry name" value="AdoMet_MTases"/>
    <property type="match status" value="1"/>
</dbReference>
<dbReference type="FunFam" id="3.40.50.150:FF:000028">
    <property type="entry name" value="Ubiquinone biosynthesis O-methyltransferase"/>
    <property type="match status" value="1"/>
</dbReference>
<dbReference type="Gene3D" id="3.40.50.150">
    <property type="entry name" value="Vaccinia Virus protein VP39"/>
    <property type="match status" value="1"/>
</dbReference>
<dbReference type="HAMAP" id="MF_00472">
    <property type="entry name" value="UbiG"/>
    <property type="match status" value="1"/>
</dbReference>
<dbReference type="InterPro" id="IPR029063">
    <property type="entry name" value="SAM-dependent_MTases_sf"/>
</dbReference>
<dbReference type="InterPro" id="IPR010233">
    <property type="entry name" value="UbiG_MeTrfase"/>
</dbReference>
<dbReference type="NCBIfam" id="TIGR01983">
    <property type="entry name" value="UbiG"/>
    <property type="match status" value="1"/>
</dbReference>
<dbReference type="PANTHER" id="PTHR43464">
    <property type="entry name" value="METHYLTRANSFERASE"/>
    <property type="match status" value="1"/>
</dbReference>
<dbReference type="PANTHER" id="PTHR43464:SF19">
    <property type="entry name" value="UBIQUINONE BIOSYNTHESIS O-METHYLTRANSFERASE, MITOCHONDRIAL"/>
    <property type="match status" value="1"/>
</dbReference>
<dbReference type="Pfam" id="PF13489">
    <property type="entry name" value="Methyltransf_23"/>
    <property type="match status" value="1"/>
</dbReference>
<dbReference type="SUPFAM" id="SSF53335">
    <property type="entry name" value="S-adenosyl-L-methionine-dependent methyltransferases"/>
    <property type="match status" value="1"/>
</dbReference>
<protein>
    <recommendedName>
        <fullName evidence="1">Ubiquinone biosynthesis O-methyltransferase</fullName>
    </recommendedName>
    <alternativeName>
        <fullName evidence="1">2-polyprenyl-6-hydroxyphenol methylase</fullName>
        <ecNumber evidence="1">2.1.1.222</ecNumber>
    </alternativeName>
    <alternativeName>
        <fullName evidence="1">3-demethylubiquinone 3-O-methyltransferase</fullName>
        <ecNumber evidence="1">2.1.1.64</ecNumber>
    </alternativeName>
</protein>
<comment type="function">
    <text evidence="1">O-methyltransferase that catalyzes the 2 O-methylation steps in the ubiquinone biosynthetic pathway.</text>
</comment>
<comment type="catalytic activity">
    <reaction evidence="1">
        <text>a 3-demethylubiquinol + S-adenosyl-L-methionine = a ubiquinol + S-adenosyl-L-homocysteine + H(+)</text>
        <dbReference type="Rhea" id="RHEA:44380"/>
        <dbReference type="Rhea" id="RHEA-COMP:9566"/>
        <dbReference type="Rhea" id="RHEA-COMP:10914"/>
        <dbReference type="ChEBI" id="CHEBI:15378"/>
        <dbReference type="ChEBI" id="CHEBI:17976"/>
        <dbReference type="ChEBI" id="CHEBI:57856"/>
        <dbReference type="ChEBI" id="CHEBI:59789"/>
        <dbReference type="ChEBI" id="CHEBI:84422"/>
        <dbReference type="EC" id="2.1.1.64"/>
    </reaction>
</comment>
<comment type="catalytic activity">
    <reaction evidence="1">
        <text>a 3-(all-trans-polyprenyl)benzene-1,2-diol + S-adenosyl-L-methionine = a 2-methoxy-6-(all-trans-polyprenyl)phenol + S-adenosyl-L-homocysteine + H(+)</text>
        <dbReference type="Rhea" id="RHEA:31411"/>
        <dbReference type="Rhea" id="RHEA-COMP:9550"/>
        <dbReference type="Rhea" id="RHEA-COMP:9551"/>
        <dbReference type="ChEBI" id="CHEBI:15378"/>
        <dbReference type="ChEBI" id="CHEBI:57856"/>
        <dbReference type="ChEBI" id="CHEBI:59789"/>
        <dbReference type="ChEBI" id="CHEBI:62729"/>
        <dbReference type="ChEBI" id="CHEBI:62731"/>
        <dbReference type="EC" id="2.1.1.222"/>
    </reaction>
</comment>
<comment type="pathway">
    <text evidence="1">Cofactor biosynthesis; ubiquinone biosynthesis.</text>
</comment>
<comment type="similarity">
    <text evidence="1">Belongs to the methyltransferase superfamily. UbiG/COQ3 family.</text>
</comment>
<feature type="chain" id="PRO_1000013897" description="Ubiquinone biosynthesis O-methyltransferase">
    <location>
        <begin position="1"/>
        <end position="232"/>
    </location>
</feature>
<feature type="binding site" evidence="1">
    <location>
        <position position="36"/>
    </location>
    <ligand>
        <name>S-adenosyl-L-methionine</name>
        <dbReference type="ChEBI" id="CHEBI:59789"/>
    </ligand>
</feature>
<feature type="binding site" evidence="1">
    <location>
        <position position="55"/>
    </location>
    <ligand>
        <name>S-adenosyl-L-methionine</name>
        <dbReference type="ChEBI" id="CHEBI:59789"/>
    </ligand>
</feature>
<feature type="binding site" evidence="1">
    <location>
        <position position="76"/>
    </location>
    <ligand>
        <name>S-adenosyl-L-methionine</name>
        <dbReference type="ChEBI" id="CHEBI:59789"/>
    </ligand>
</feature>
<feature type="binding site" evidence="1">
    <location>
        <position position="120"/>
    </location>
    <ligand>
        <name>S-adenosyl-L-methionine</name>
        <dbReference type="ChEBI" id="CHEBI:59789"/>
    </ligand>
</feature>
<evidence type="ECO:0000255" key="1">
    <source>
        <dbReference type="HAMAP-Rule" id="MF_00472"/>
    </source>
</evidence>
<accession>Q13VB4</accession>
<organism>
    <name type="scientific">Paraburkholderia xenovorans (strain LB400)</name>
    <dbReference type="NCBI Taxonomy" id="266265"/>
    <lineage>
        <taxon>Bacteria</taxon>
        <taxon>Pseudomonadati</taxon>
        <taxon>Pseudomonadota</taxon>
        <taxon>Betaproteobacteria</taxon>
        <taxon>Burkholderiales</taxon>
        <taxon>Burkholderiaceae</taxon>
        <taxon>Paraburkholderia</taxon>
    </lineage>
</organism>
<gene>
    <name evidence="1" type="primary">ubiG</name>
    <name type="ordered locus">Bxeno_A3437</name>
    <name type="ORF">Bxe_A0972</name>
</gene>
<reference key="1">
    <citation type="journal article" date="2006" name="Proc. Natl. Acad. Sci. U.S.A.">
        <title>Burkholderia xenovorans LB400 harbors a multi-replicon, 9.73-Mbp genome shaped for versatility.</title>
        <authorList>
            <person name="Chain P.S.G."/>
            <person name="Denef V.J."/>
            <person name="Konstantinidis K.T."/>
            <person name="Vergez L.M."/>
            <person name="Agullo L."/>
            <person name="Reyes V.L."/>
            <person name="Hauser L."/>
            <person name="Cordova M."/>
            <person name="Gomez L."/>
            <person name="Gonzalez M."/>
            <person name="Land M."/>
            <person name="Lao V."/>
            <person name="Larimer F."/>
            <person name="LiPuma J.J."/>
            <person name="Mahenthiralingam E."/>
            <person name="Malfatti S.A."/>
            <person name="Marx C.J."/>
            <person name="Parnell J.J."/>
            <person name="Ramette A."/>
            <person name="Richardson P."/>
            <person name="Seeger M."/>
            <person name="Smith D."/>
            <person name="Spilker T."/>
            <person name="Sul W.J."/>
            <person name="Tsoi T.V."/>
            <person name="Ulrich L.E."/>
            <person name="Zhulin I.B."/>
            <person name="Tiedje J.M."/>
        </authorList>
    </citation>
    <scope>NUCLEOTIDE SEQUENCE [LARGE SCALE GENOMIC DNA]</scope>
    <source>
        <strain>LB400</strain>
    </source>
</reference>